<proteinExistence type="inferred from homology"/>
<gene>
    <name evidence="1" type="primary">atpH</name>
    <name type="ordered locus">HEAR3408</name>
</gene>
<keyword id="KW-0066">ATP synthesis</keyword>
<keyword id="KW-0997">Cell inner membrane</keyword>
<keyword id="KW-1003">Cell membrane</keyword>
<keyword id="KW-0139">CF(1)</keyword>
<keyword id="KW-0375">Hydrogen ion transport</keyword>
<keyword id="KW-0406">Ion transport</keyword>
<keyword id="KW-0472">Membrane</keyword>
<keyword id="KW-1185">Reference proteome</keyword>
<keyword id="KW-0813">Transport</keyword>
<dbReference type="EMBL" id="CU207211">
    <property type="protein sequence ID" value="CAL63509.1"/>
    <property type="molecule type" value="Genomic_DNA"/>
</dbReference>
<dbReference type="SMR" id="A4GAH2"/>
<dbReference type="STRING" id="204773.HEAR3408"/>
<dbReference type="KEGG" id="har:HEAR3408"/>
<dbReference type="eggNOG" id="COG0712">
    <property type="taxonomic scope" value="Bacteria"/>
</dbReference>
<dbReference type="HOGENOM" id="CLU_085114_3_0_4"/>
<dbReference type="OrthoDB" id="9816221at2"/>
<dbReference type="Proteomes" id="UP000006697">
    <property type="component" value="Chromosome"/>
</dbReference>
<dbReference type="GO" id="GO:0005886">
    <property type="term" value="C:plasma membrane"/>
    <property type="evidence" value="ECO:0007669"/>
    <property type="project" value="UniProtKB-SubCell"/>
</dbReference>
<dbReference type="GO" id="GO:0045259">
    <property type="term" value="C:proton-transporting ATP synthase complex"/>
    <property type="evidence" value="ECO:0007669"/>
    <property type="project" value="UniProtKB-KW"/>
</dbReference>
<dbReference type="GO" id="GO:0046933">
    <property type="term" value="F:proton-transporting ATP synthase activity, rotational mechanism"/>
    <property type="evidence" value="ECO:0007669"/>
    <property type="project" value="UniProtKB-UniRule"/>
</dbReference>
<dbReference type="Gene3D" id="1.10.520.20">
    <property type="entry name" value="N-terminal domain of the delta subunit of the F1F0-ATP synthase"/>
    <property type="match status" value="1"/>
</dbReference>
<dbReference type="HAMAP" id="MF_01416">
    <property type="entry name" value="ATP_synth_delta_bact"/>
    <property type="match status" value="1"/>
</dbReference>
<dbReference type="InterPro" id="IPR026015">
    <property type="entry name" value="ATP_synth_OSCP/delta_N_sf"/>
</dbReference>
<dbReference type="InterPro" id="IPR000711">
    <property type="entry name" value="ATPase_OSCP/dsu"/>
</dbReference>
<dbReference type="NCBIfam" id="TIGR01145">
    <property type="entry name" value="ATP_synt_delta"/>
    <property type="match status" value="1"/>
</dbReference>
<dbReference type="NCBIfam" id="NF004402">
    <property type="entry name" value="PRK05758.2-2"/>
    <property type="match status" value="1"/>
</dbReference>
<dbReference type="PANTHER" id="PTHR11910">
    <property type="entry name" value="ATP SYNTHASE DELTA CHAIN"/>
    <property type="match status" value="1"/>
</dbReference>
<dbReference type="Pfam" id="PF00213">
    <property type="entry name" value="OSCP"/>
    <property type="match status" value="1"/>
</dbReference>
<dbReference type="PRINTS" id="PR00125">
    <property type="entry name" value="ATPASEDELTA"/>
</dbReference>
<dbReference type="SUPFAM" id="SSF47928">
    <property type="entry name" value="N-terminal domain of the delta subunit of the F1F0-ATP synthase"/>
    <property type="match status" value="1"/>
</dbReference>
<feature type="chain" id="PRO_0000370999" description="ATP synthase subunit delta">
    <location>
        <begin position="1"/>
        <end position="177"/>
    </location>
</feature>
<name>ATPD_HERAR</name>
<accession>A4GAH2</accession>
<comment type="function">
    <text evidence="1">F(1)F(0) ATP synthase produces ATP from ADP in the presence of a proton or sodium gradient. F-type ATPases consist of two structural domains, F(1) containing the extramembraneous catalytic core and F(0) containing the membrane proton channel, linked together by a central stalk and a peripheral stalk. During catalysis, ATP synthesis in the catalytic domain of F(1) is coupled via a rotary mechanism of the central stalk subunits to proton translocation.</text>
</comment>
<comment type="function">
    <text evidence="1">This protein is part of the stalk that links CF(0) to CF(1). It either transmits conformational changes from CF(0) to CF(1) or is implicated in proton conduction.</text>
</comment>
<comment type="subunit">
    <text evidence="1">F-type ATPases have 2 components, F(1) - the catalytic core - and F(0) - the membrane proton channel. F(1) has five subunits: alpha(3), beta(3), gamma(1), delta(1), epsilon(1). F(0) has three main subunits: a(1), b(2) and c(10-14). The alpha and beta chains form an alternating ring which encloses part of the gamma chain. F(1) is attached to F(0) by a central stalk formed by the gamma and epsilon chains, while a peripheral stalk is formed by the delta and b chains.</text>
</comment>
<comment type="subcellular location">
    <subcellularLocation>
        <location evidence="1">Cell inner membrane</location>
        <topology evidence="1">Peripheral membrane protein</topology>
    </subcellularLocation>
</comment>
<comment type="similarity">
    <text evidence="1">Belongs to the ATPase delta chain family.</text>
</comment>
<organism>
    <name type="scientific">Herminiimonas arsenicoxydans</name>
    <dbReference type="NCBI Taxonomy" id="204773"/>
    <lineage>
        <taxon>Bacteria</taxon>
        <taxon>Pseudomonadati</taxon>
        <taxon>Pseudomonadota</taxon>
        <taxon>Betaproteobacteria</taxon>
        <taxon>Burkholderiales</taxon>
        <taxon>Oxalobacteraceae</taxon>
        <taxon>Herminiimonas</taxon>
    </lineage>
</organism>
<evidence type="ECO:0000255" key="1">
    <source>
        <dbReference type="HAMAP-Rule" id="MF_01416"/>
    </source>
</evidence>
<protein>
    <recommendedName>
        <fullName evidence="1">ATP synthase subunit delta</fullName>
    </recommendedName>
    <alternativeName>
        <fullName evidence="1">ATP synthase F(1) sector subunit delta</fullName>
    </alternativeName>
    <alternativeName>
        <fullName evidence="1">F-type ATPase subunit delta</fullName>
        <shortName evidence="1">F-ATPase subunit delta</shortName>
    </alternativeName>
</protein>
<reference key="1">
    <citation type="journal article" date="2007" name="PLoS Genet.">
        <title>A tale of two oxidation states: bacterial colonization of arsenic-rich environments.</title>
        <authorList>
            <person name="Muller D."/>
            <person name="Medigue C."/>
            <person name="Koechler S."/>
            <person name="Barbe V."/>
            <person name="Barakat M."/>
            <person name="Talla E."/>
            <person name="Bonnefoy V."/>
            <person name="Krin E."/>
            <person name="Arsene-Ploetze F."/>
            <person name="Carapito C."/>
            <person name="Chandler M."/>
            <person name="Cournoyer B."/>
            <person name="Cruveiller S."/>
            <person name="Dossat C."/>
            <person name="Duval S."/>
            <person name="Heymann M."/>
            <person name="Leize E."/>
            <person name="Lieutaud A."/>
            <person name="Lievremont D."/>
            <person name="Makita Y."/>
            <person name="Mangenot S."/>
            <person name="Nitschke W."/>
            <person name="Ortet P."/>
            <person name="Perdrial N."/>
            <person name="Schoepp B."/>
            <person name="Siguier P."/>
            <person name="Simeonova D.D."/>
            <person name="Rouy Z."/>
            <person name="Segurens B."/>
            <person name="Turlin E."/>
            <person name="Vallenet D."/>
            <person name="van Dorsselaer A."/>
            <person name="Weiss S."/>
            <person name="Weissenbach J."/>
            <person name="Lett M.-C."/>
            <person name="Danchin A."/>
            <person name="Bertin P.N."/>
        </authorList>
    </citation>
    <scope>NUCLEOTIDE SEQUENCE [LARGE SCALE GENOMIC DNA]</scope>
    <source>
        <strain>ULPAs1</strain>
    </source>
</reference>
<sequence length="177" mass="18826">MAELATIARPYAEALFRVAKAADLNGWSELVSEMAQVAAHPDVYALAHNPKISDDVISSAFISALKSPVGAEAKNFINMLVQNDRLTLLPEIATQFHALKNAQEGAADAEIVSAFELSAAQLTELVATLEKKFGRKLNPTVAVDSALIGGVRVVVGDEVLDTSVRAKLQQMQVALTA</sequence>